<proteinExistence type="evidence at protein level"/>
<feature type="chain" id="PRO_0000249481" description="Centromere protein I">
    <location>
        <begin position="1"/>
        <end position="753"/>
    </location>
</feature>
<feature type="region of interest" description="Disordered" evidence="1">
    <location>
        <begin position="1"/>
        <end position="54"/>
    </location>
</feature>
<feature type="compositionally biased region" description="Basic residues" evidence="1">
    <location>
        <begin position="1"/>
        <end position="15"/>
    </location>
</feature>
<accession>Q8AYS7</accession>
<organism>
    <name type="scientific">Gallus gallus</name>
    <name type="common">Chicken</name>
    <dbReference type="NCBI Taxonomy" id="9031"/>
    <lineage>
        <taxon>Eukaryota</taxon>
        <taxon>Metazoa</taxon>
        <taxon>Chordata</taxon>
        <taxon>Craniata</taxon>
        <taxon>Vertebrata</taxon>
        <taxon>Euteleostomi</taxon>
        <taxon>Archelosauria</taxon>
        <taxon>Archosauria</taxon>
        <taxon>Dinosauria</taxon>
        <taxon>Saurischia</taxon>
        <taxon>Theropoda</taxon>
        <taxon>Coelurosauria</taxon>
        <taxon>Aves</taxon>
        <taxon>Neognathae</taxon>
        <taxon>Galloanserae</taxon>
        <taxon>Galliformes</taxon>
        <taxon>Phasianidae</taxon>
        <taxon>Phasianinae</taxon>
        <taxon>Gallus</taxon>
    </lineage>
</organism>
<name>CENPI_CHICK</name>
<keyword id="KW-0137">Centromere</keyword>
<keyword id="KW-0158">Chromosome</keyword>
<keyword id="KW-0539">Nucleus</keyword>
<keyword id="KW-1185">Reference proteome</keyword>
<sequence length="753" mass="86894">MQRRQSSKHSKRPLQVHHSNQTDLSAWRKGGTVDTEKSAQNRQSLSDQKNDNEQDSLEQALSYFEKIQDRVSLKKSEVLQKHLSTMESIALKRGLPPEGFDVLLDVALSGKLADTVNTRLLKSLIPASAIPESSIVSSVSWFCVSKCSSNIQLLFLRWLITMFDFIDHKEQVHALYGIFFSFLNDEKLCPYICHVLYLLTRKENVKPFRVRRLLDLQSKMGMQPHLQALLSLYKLFCPELVSITLPQKMKTYFKNADGPWKAAINAVRQRNQANSTVPQPLLLGTAQPHSRKRKWNTQLIVPASSANAQNLVVGGKMSRADSYSANESFPVEQLRTFPQLLQNIHRLEFPSQMGSVLTNPLLLHYMNCSKDESVYLRLYYWMGQTLQEECTWCVVDNNQYEEEFRGFLETVYKAECFLQEGFPSCEEFLYRSLPLWDGVSCRSQILQLVSWIPLSTFSEMKSQLCDPLAQLFFTSSLYFKCSVLESLKELLQNWLNWHVVQLDSESDSQFSSLNTTLSGLVNGVAELINFVGRISTAALHLEKSHTFLLYFILDFYETVCDIYLKYKLPLLIMPPAGVFYPALLSMDSVNLNQLCYIMYRYRTNLIAAKENEMSKKKIQQFKFSSQTYQEYNQYIIAMVGCLWTSSAFQKDNHPEGIRLDDELLKKTGVREYKNSFNIVYHPALMCYAVDFLQQAWPDDTTFNFNLIKGKKWNWYLRYLYGQGLEGLKLFIESSINRVSKASQSKAEDEDEKV</sequence>
<dbReference type="EMBL" id="AB073426">
    <property type="protein sequence ID" value="BAC22109.1"/>
    <property type="molecule type" value="mRNA"/>
</dbReference>
<dbReference type="RefSeq" id="NP_989863.1">
    <property type="nucleotide sequence ID" value="NM_204532.1"/>
</dbReference>
<dbReference type="SMR" id="Q8AYS7"/>
<dbReference type="BioGRID" id="675501">
    <property type="interactions" value="5"/>
</dbReference>
<dbReference type="FunCoup" id="Q8AYS7">
    <property type="interactions" value="284"/>
</dbReference>
<dbReference type="IntAct" id="Q8AYS7">
    <property type="interactions" value="1"/>
</dbReference>
<dbReference type="STRING" id="9031.ENSGALP00000055016"/>
<dbReference type="PaxDb" id="9031-ENSGALP00000008063"/>
<dbReference type="GeneID" id="395207"/>
<dbReference type="KEGG" id="gga:395207"/>
<dbReference type="CTD" id="2491"/>
<dbReference type="VEuPathDB" id="HostDB:geneid_395207"/>
<dbReference type="eggNOG" id="ENOG502QU9H">
    <property type="taxonomic scope" value="Eukaryota"/>
</dbReference>
<dbReference type="HOGENOM" id="CLU_022189_0_0_1"/>
<dbReference type="InParanoid" id="Q8AYS7"/>
<dbReference type="OrthoDB" id="6347512at2759"/>
<dbReference type="PhylomeDB" id="Q8AYS7"/>
<dbReference type="Reactome" id="R-GGA-141444">
    <property type="pathway name" value="Amplification of signal from unattached kinetochores via a MAD2 inhibitory signal"/>
</dbReference>
<dbReference type="Reactome" id="R-GGA-2467813">
    <property type="pathway name" value="Separation of Sister Chromatids"/>
</dbReference>
<dbReference type="Reactome" id="R-GGA-2500257">
    <property type="pathway name" value="Resolution of Sister Chromatid Cohesion"/>
</dbReference>
<dbReference type="Reactome" id="R-GGA-5663220">
    <property type="pathway name" value="RHO GTPases Activate Formins"/>
</dbReference>
<dbReference type="Reactome" id="R-GGA-606279">
    <property type="pathway name" value="Deposition of new CENPA-containing nucleosomes at the centromere"/>
</dbReference>
<dbReference type="Reactome" id="R-GGA-9648025">
    <property type="pathway name" value="EML4 and NUDC in mitotic spindle formation"/>
</dbReference>
<dbReference type="PRO" id="PR:Q8AYS7"/>
<dbReference type="Proteomes" id="UP000000539">
    <property type="component" value="Chromosome 4"/>
</dbReference>
<dbReference type="Bgee" id="ENSGALG00000005038">
    <property type="expression patterns" value="Expressed in spermatocyte and 8 other cell types or tissues"/>
</dbReference>
<dbReference type="GO" id="GO:0000939">
    <property type="term" value="C:inner kinetochore"/>
    <property type="evidence" value="ECO:0000318"/>
    <property type="project" value="GO_Central"/>
</dbReference>
<dbReference type="GO" id="GO:0005634">
    <property type="term" value="C:nucleus"/>
    <property type="evidence" value="ECO:0007669"/>
    <property type="project" value="UniProtKB-SubCell"/>
</dbReference>
<dbReference type="GO" id="GO:0034080">
    <property type="term" value="P:CENP-A containing chromatin assembly"/>
    <property type="evidence" value="ECO:0000318"/>
    <property type="project" value="GO_Central"/>
</dbReference>
<dbReference type="GO" id="GO:0000070">
    <property type="term" value="P:mitotic sister chromatid segregation"/>
    <property type="evidence" value="ECO:0000318"/>
    <property type="project" value="GO_Central"/>
</dbReference>
<dbReference type="InterPro" id="IPR012485">
    <property type="entry name" value="CENP-I"/>
</dbReference>
<dbReference type="PANTHER" id="PTHR48208">
    <property type="entry name" value="CENTROMERE PROTEIN I"/>
    <property type="match status" value="1"/>
</dbReference>
<dbReference type="PANTHER" id="PTHR48208:SF2">
    <property type="entry name" value="CENTROMERE PROTEIN I"/>
    <property type="match status" value="1"/>
</dbReference>
<dbReference type="Pfam" id="PF07778">
    <property type="entry name" value="CENP-I"/>
    <property type="match status" value="1"/>
</dbReference>
<evidence type="ECO:0000256" key="1">
    <source>
        <dbReference type="SAM" id="MobiDB-lite"/>
    </source>
</evidence>
<evidence type="ECO:0000269" key="2">
    <source>
    </source>
</evidence>
<evidence type="ECO:0000269" key="3">
    <source>
    </source>
</evidence>
<evidence type="ECO:0000305" key="4"/>
<protein>
    <recommendedName>
        <fullName>Centromere protein I</fullName>
        <shortName>CENP-I</shortName>
    </recommendedName>
</protein>
<gene>
    <name type="primary">CENPI</name>
</gene>
<comment type="function">
    <text evidence="2">Component of the CENPA-HI complex, a centromeric complex involved in assembly of kinetochore proteins, mitotic progression and chromosome segregation. Required for the localization of CENPC but not CENPA to the centromere. It however may be involved in incorporation of newly synthesized CENPA into centromeres via its interaction with the CENPA-NAC complex.</text>
</comment>
<comment type="subunit">
    <text evidence="3">Component of the CENPA-HI complex, at least composed of CENPH, CENPI, CENPK, CENPL, CENPM, CENPO and CENPP.</text>
</comment>
<comment type="subcellular location">
    <subcellularLocation>
        <location evidence="2">Nucleus</location>
    </subcellularLocation>
    <subcellularLocation>
        <location evidence="2">Chromosome</location>
        <location evidence="2">Centromere</location>
    </subcellularLocation>
    <text>Localizes exclusively in the centromeres.</text>
</comment>
<comment type="similarity">
    <text evidence="4">Belongs to the CENP-I/CTF3 family.</text>
</comment>
<reference key="1">
    <citation type="journal article" date="2002" name="Dev. Cell">
        <title>CENP-I is essential for centromere function in vertebrate cells.</title>
        <authorList>
            <person name="Nishihashi A."/>
            <person name="Haraguchi T."/>
            <person name="Hiraoka Y."/>
            <person name="Ikemura T."/>
            <person name="Regnier V."/>
            <person name="Dodson H."/>
            <person name="Earnshaw W.C."/>
            <person name="Fukagawa T."/>
        </authorList>
    </citation>
    <scope>NUCLEOTIDE SEQUENCE [MRNA]</scope>
    <scope>FUNCTION</scope>
    <scope>SUBCELLULAR LOCATION</scope>
</reference>
<reference key="2">
    <citation type="journal article" date="2006" name="Nat. Cell Biol.">
        <title>The CENP-H-I complex is required for the efficient incorporation of newly synthesized CENP-A into centromeres.</title>
        <authorList>
            <person name="Okada M."/>
            <person name="Cheeseman I.M."/>
            <person name="Hori T."/>
            <person name="Okawa K."/>
            <person name="McLeod I.X."/>
            <person name="Yates J.R. III"/>
            <person name="Desai A."/>
            <person name="Fukagawa T."/>
        </authorList>
    </citation>
    <scope>IDENTIFICATION BY MASS SPECTROMETRY</scope>
    <scope>IDENTIFICATION IN A COMPLEX WITH CENPH; CENPK; CENPL; CENPM; CENPO AND CENPP</scope>
</reference>